<name>EFTS_CHLFF</name>
<proteinExistence type="inferred from homology"/>
<comment type="function">
    <text evidence="1">Associates with the EF-Tu.GDP complex and induces the exchange of GDP to GTP. It remains bound to the aminoacyl-tRNA.EF-Tu.GTP complex up to the GTP hydrolysis stage on the ribosome.</text>
</comment>
<comment type="subcellular location">
    <subcellularLocation>
        <location evidence="1">Cytoplasm</location>
    </subcellularLocation>
</comment>
<comment type="similarity">
    <text evidence="1">Belongs to the EF-Ts family.</text>
</comment>
<gene>
    <name evidence="1" type="primary">tsf</name>
    <name type="ordered locus">CF0960</name>
</gene>
<dbReference type="EMBL" id="AP006861">
    <property type="protein sequence ID" value="BAE81732.1"/>
    <property type="molecule type" value="Genomic_DNA"/>
</dbReference>
<dbReference type="RefSeq" id="WP_011458505.1">
    <property type="nucleotide sequence ID" value="NC_007899.1"/>
</dbReference>
<dbReference type="SMR" id="Q252Q6"/>
<dbReference type="STRING" id="264202.CF0960"/>
<dbReference type="KEGG" id="cfe:CF0960"/>
<dbReference type="eggNOG" id="COG0264">
    <property type="taxonomic scope" value="Bacteria"/>
</dbReference>
<dbReference type="HOGENOM" id="CLU_047155_0_0_0"/>
<dbReference type="OrthoDB" id="9808348at2"/>
<dbReference type="Proteomes" id="UP000001260">
    <property type="component" value="Chromosome"/>
</dbReference>
<dbReference type="GO" id="GO:0005737">
    <property type="term" value="C:cytoplasm"/>
    <property type="evidence" value="ECO:0007669"/>
    <property type="project" value="UniProtKB-SubCell"/>
</dbReference>
<dbReference type="GO" id="GO:0003746">
    <property type="term" value="F:translation elongation factor activity"/>
    <property type="evidence" value="ECO:0007669"/>
    <property type="project" value="UniProtKB-UniRule"/>
</dbReference>
<dbReference type="CDD" id="cd14275">
    <property type="entry name" value="UBA_EF-Ts"/>
    <property type="match status" value="1"/>
</dbReference>
<dbReference type="FunFam" id="1.10.286.20:FF:000001">
    <property type="entry name" value="Elongation factor Ts"/>
    <property type="match status" value="1"/>
</dbReference>
<dbReference type="FunFam" id="1.10.8.10:FF:000001">
    <property type="entry name" value="Elongation factor Ts"/>
    <property type="match status" value="1"/>
</dbReference>
<dbReference type="Gene3D" id="1.10.286.20">
    <property type="match status" value="1"/>
</dbReference>
<dbReference type="Gene3D" id="1.10.8.10">
    <property type="entry name" value="DNA helicase RuvA subunit, C-terminal domain"/>
    <property type="match status" value="1"/>
</dbReference>
<dbReference type="Gene3D" id="3.30.479.20">
    <property type="entry name" value="Elongation factor Ts, dimerisation domain"/>
    <property type="match status" value="2"/>
</dbReference>
<dbReference type="HAMAP" id="MF_00050">
    <property type="entry name" value="EF_Ts"/>
    <property type="match status" value="1"/>
</dbReference>
<dbReference type="InterPro" id="IPR036402">
    <property type="entry name" value="EF-Ts_dimer_sf"/>
</dbReference>
<dbReference type="InterPro" id="IPR001816">
    <property type="entry name" value="Transl_elong_EFTs/EF1B"/>
</dbReference>
<dbReference type="InterPro" id="IPR014039">
    <property type="entry name" value="Transl_elong_EFTs/EF1B_dimer"/>
</dbReference>
<dbReference type="InterPro" id="IPR018101">
    <property type="entry name" value="Transl_elong_Ts_CS"/>
</dbReference>
<dbReference type="InterPro" id="IPR009060">
    <property type="entry name" value="UBA-like_sf"/>
</dbReference>
<dbReference type="NCBIfam" id="TIGR00116">
    <property type="entry name" value="tsf"/>
    <property type="match status" value="1"/>
</dbReference>
<dbReference type="PANTHER" id="PTHR11741">
    <property type="entry name" value="ELONGATION FACTOR TS"/>
    <property type="match status" value="1"/>
</dbReference>
<dbReference type="PANTHER" id="PTHR11741:SF0">
    <property type="entry name" value="ELONGATION FACTOR TS, MITOCHONDRIAL"/>
    <property type="match status" value="1"/>
</dbReference>
<dbReference type="Pfam" id="PF00889">
    <property type="entry name" value="EF_TS"/>
    <property type="match status" value="1"/>
</dbReference>
<dbReference type="SUPFAM" id="SSF54713">
    <property type="entry name" value="Elongation factor Ts (EF-Ts), dimerisation domain"/>
    <property type="match status" value="1"/>
</dbReference>
<dbReference type="SUPFAM" id="SSF46934">
    <property type="entry name" value="UBA-like"/>
    <property type="match status" value="1"/>
</dbReference>
<dbReference type="PROSITE" id="PS01126">
    <property type="entry name" value="EF_TS_1"/>
    <property type="match status" value="1"/>
</dbReference>
<dbReference type="PROSITE" id="PS01127">
    <property type="entry name" value="EF_TS_2"/>
    <property type="match status" value="1"/>
</dbReference>
<keyword id="KW-0963">Cytoplasm</keyword>
<keyword id="KW-0251">Elongation factor</keyword>
<keyword id="KW-0648">Protein biosynthesis</keyword>
<protein>
    <recommendedName>
        <fullName evidence="1">Elongation factor Ts</fullName>
        <shortName evidence="1">EF-Ts</shortName>
    </recommendedName>
</protein>
<accession>Q252Q6</accession>
<organism>
    <name type="scientific">Chlamydia felis (strain Fe/C-56)</name>
    <name type="common">Chlamydophila felis</name>
    <dbReference type="NCBI Taxonomy" id="264202"/>
    <lineage>
        <taxon>Bacteria</taxon>
        <taxon>Pseudomonadati</taxon>
        <taxon>Chlamydiota</taxon>
        <taxon>Chlamydiia</taxon>
        <taxon>Chlamydiales</taxon>
        <taxon>Chlamydiaceae</taxon>
        <taxon>Chlamydia/Chlamydophila group</taxon>
        <taxon>Chlamydia</taxon>
    </lineage>
</organism>
<feature type="chain" id="PRO_0000241473" description="Elongation factor Ts">
    <location>
        <begin position="1"/>
        <end position="282"/>
    </location>
</feature>
<feature type="region of interest" description="Involved in Mg(2+) ion dislocation from EF-Tu" evidence="1">
    <location>
        <begin position="80"/>
        <end position="83"/>
    </location>
</feature>
<sequence length="282" mass="30709">MSNFSMETLKLLRQQTGVGLTKCKEALAECNGNLEEAVVYLRKLGLASASKKEHRETKEGVIAAKSDARGTAIVEVNVETDFVANNAVFRSFVDGLVEDVLNHKADNVDALLQLPSFQDASLTVDELRAVTMQTVGENIRISRIKYFPKTTEESVGIYSHGNGKAVSITILSGLSDQESLAKDISMHIVAAQPLFLSKESVPEDALAKEKEIISSQIQGKPQAVIDKIISGKLGTFFQDVCLLEQAYIKNPDTTIQHLINGVSKTSGNSVEVKEFILWKIGA</sequence>
<evidence type="ECO:0000255" key="1">
    <source>
        <dbReference type="HAMAP-Rule" id="MF_00050"/>
    </source>
</evidence>
<reference key="1">
    <citation type="journal article" date="2006" name="DNA Res.">
        <title>Genome sequence of the cat pathogen, Chlamydophila felis.</title>
        <authorList>
            <person name="Azuma Y."/>
            <person name="Hirakawa H."/>
            <person name="Yamashita A."/>
            <person name="Cai Y."/>
            <person name="Rahman M.A."/>
            <person name="Suzuki H."/>
            <person name="Mitaku S."/>
            <person name="Toh H."/>
            <person name="Goto S."/>
            <person name="Murakami T."/>
            <person name="Sugi K."/>
            <person name="Hayashi H."/>
            <person name="Fukushi H."/>
            <person name="Hattori M."/>
            <person name="Kuhara S."/>
            <person name="Shirai M."/>
        </authorList>
    </citation>
    <scope>NUCLEOTIDE SEQUENCE [LARGE SCALE GENOMIC DNA]</scope>
    <source>
        <strain>Fe/C-56</strain>
    </source>
</reference>